<name>CR020_HUMAN</name>
<accession>Q7Z4B0</accession>
<accession>Q8NHR5</accession>
<keyword id="KW-0025">Alternative splicing</keyword>
<keyword id="KW-0325">Glycoprotein</keyword>
<keyword id="KW-1185">Reference proteome</keyword>
<keyword id="KW-0964">Secreted</keyword>
<keyword id="KW-0732">Signal</keyword>
<gene>
    <name type="primary">LINC00305</name>
    <name type="synonym">C18orf20</name>
    <name type="synonym">NCRNA00305</name>
</gene>
<sequence>MINLHRLCIIHVVATLLSTLLSLISVAISATCKDEKGKQEMETGQQPSGLSATLTKVKCAKRQKTVVRVRFYMLSMKNKACRKNLSKGYNQRPEGSKEESHMVVKEKRKGDH</sequence>
<protein>
    <recommendedName>
        <fullName>Putative uncharacterized protein encoded by LINC00305</fullName>
    </recommendedName>
</protein>
<reference key="1">
    <citation type="submission" date="2003-07" db="EMBL/GenBank/DDBJ databases">
        <authorList>
            <person name="Shen C."/>
            <person name="Ke R."/>
            <person name="Li H."/>
            <person name="Zhou G."/>
            <person name="Zheng G."/>
            <person name="Zhong G."/>
            <person name="Yu R."/>
            <person name="Lin L."/>
            <person name="Yang S."/>
        </authorList>
    </citation>
    <scope>NUCLEOTIDE SEQUENCE [LARGE SCALE MRNA] (ISOFORM 1)</scope>
</reference>
<reference key="2">
    <citation type="journal article" date="2005" name="Nature">
        <title>DNA sequence and analysis of human chromosome 18.</title>
        <authorList>
            <person name="Nusbaum C."/>
            <person name="Zody M.C."/>
            <person name="Borowsky M.L."/>
            <person name="Kamal M."/>
            <person name="Kodira C.D."/>
            <person name="Taylor T.D."/>
            <person name="Whittaker C.A."/>
            <person name="Chang J.L."/>
            <person name="Cuomo C.A."/>
            <person name="Dewar K."/>
            <person name="FitzGerald M.G."/>
            <person name="Yang X."/>
            <person name="Abouelleil A."/>
            <person name="Allen N.R."/>
            <person name="Anderson S."/>
            <person name="Bloom T."/>
            <person name="Bugalter B."/>
            <person name="Butler J."/>
            <person name="Cook A."/>
            <person name="DeCaprio D."/>
            <person name="Engels R."/>
            <person name="Garber M."/>
            <person name="Gnirke A."/>
            <person name="Hafez N."/>
            <person name="Hall J.L."/>
            <person name="Norman C.H."/>
            <person name="Itoh T."/>
            <person name="Jaffe D.B."/>
            <person name="Kuroki Y."/>
            <person name="Lehoczky J."/>
            <person name="Lui A."/>
            <person name="Macdonald P."/>
            <person name="Mauceli E."/>
            <person name="Mikkelsen T.S."/>
            <person name="Naylor J.W."/>
            <person name="Nicol R."/>
            <person name="Nguyen C."/>
            <person name="Noguchi H."/>
            <person name="O'Leary S.B."/>
            <person name="Piqani B."/>
            <person name="Smith C.L."/>
            <person name="Talamas J.A."/>
            <person name="Topham K."/>
            <person name="Totoki Y."/>
            <person name="Toyoda A."/>
            <person name="Wain H.M."/>
            <person name="Young S.K."/>
            <person name="Zeng Q."/>
            <person name="Zimmer A.R."/>
            <person name="Fujiyama A."/>
            <person name="Hattori M."/>
            <person name="Birren B.W."/>
            <person name="Sakaki Y."/>
            <person name="Lander E.S."/>
        </authorList>
    </citation>
    <scope>NUCLEOTIDE SEQUENCE [LARGE SCALE GENOMIC DNA]</scope>
</reference>
<reference key="3">
    <citation type="journal article" date="2004" name="Genome Res.">
        <title>The status, quality, and expansion of the NIH full-length cDNA project: the Mammalian Gene Collection (MGC).</title>
        <authorList>
            <consortium name="The MGC Project Team"/>
        </authorList>
    </citation>
    <scope>NUCLEOTIDE SEQUENCE [LARGE SCALE MRNA] (ISOFORM 2)</scope>
    <source>
        <tissue>Testis</tissue>
    </source>
</reference>
<proteinExistence type="uncertain"/>
<comment type="subcellular location">
    <subcellularLocation>
        <location evidence="4">Secreted</location>
    </subcellularLocation>
</comment>
<comment type="alternative products">
    <event type="alternative splicing"/>
    <isoform>
        <id>Q7Z4B0-1</id>
        <name>1</name>
        <sequence type="displayed"/>
    </isoform>
    <isoform>
        <id>Q7Z4B0-2</id>
        <name>2</name>
        <sequence type="described" ref="VSP_014651"/>
    </isoform>
</comment>
<comment type="caution">
    <text evidence="4">Product of a dubious CDS prediction. May be a non-coding RNA.</text>
</comment>
<evidence type="ECO:0000255" key="1"/>
<evidence type="ECO:0000256" key="2">
    <source>
        <dbReference type="SAM" id="MobiDB-lite"/>
    </source>
</evidence>
<evidence type="ECO:0000303" key="3">
    <source>
    </source>
</evidence>
<evidence type="ECO:0000305" key="4"/>
<feature type="signal peptide" evidence="1">
    <location>
        <begin position="1"/>
        <end position="29"/>
    </location>
</feature>
<feature type="chain" id="PRO_0000019560" description="Putative uncharacterized protein encoded by LINC00305">
    <location>
        <begin position="30"/>
        <end position="112"/>
    </location>
</feature>
<feature type="region of interest" description="Disordered" evidence="2">
    <location>
        <begin position="84"/>
        <end position="112"/>
    </location>
</feature>
<feature type="compositionally biased region" description="Basic and acidic residues" evidence="2">
    <location>
        <begin position="94"/>
        <end position="112"/>
    </location>
</feature>
<feature type="glycosylation site" description="N-linked (GlcNAc...) asparagine" evidence="1">
    <location>
        <position position="84"/>
    </location>
</feature>
<feature type="splice variant" id="VSP_014651" description="In isoform 2." evidence="3">
    <location>
        <begin position="12"/>
        <end position="26"/>
    </location>
</feature>
<organism>
    <name type="scientific">Homo sapiens</name>
    <name type="common">Human</name>
    <dbReference type="NCBI Taxonomy" id="9606"/>
    <lineage>
        <taxon>Eukaryota</taxon>
        <taxon>Metazoa</taxon>
        <taxon>Chordata</taxon>
        <taxon>Craniata</taxon>
        <taxon>Vertebrata</taxon>
        <taxon>Euteleostomi</taxon>
        <taxon>Mammalia</taxon>
        <taxon>Eutheria</taxon>
        <taxon>Euarchontoglires</taxon>
        <taxon>Primates</taxon>
        <taxon>Haplorrhini</taxon>
        <taxon>Catarrhini</taxon>
        <taxon>Hominidae</taxon>
        <taxon>Homo</taxon>
    </lineage>
</organism>
<dbReference type="EMBL" id="AY336744">
    <property type="protein sequence ID" value="AAQ16114.1"/>
    <property type="molecule type" value="mRNA"/>
</dbReference>
<dbReference type="EMBL" id="AC021607">
    <property type="status" value="NOT_ANNOTATED_CDS"/>
    <property type="molecule type" value="Genomic_DNA"/>
</dbReference>
<dbReference type="EMBL" id="BC029565">
    <property type="status" value="NOT_ANNOTATED_CDS"/>
    <property type="molecule type" value="mRNA"/>
</dbReference>
<dbReference type="GlyCosmos" id="Q7Z4B0">
    <property type="glycosylation" value="1 site, No reported glycans"/>
</dbReference>
<dbReference type="GlyGen" id="Q7Z4B0">
    <property type="glycosylation" value="1 site"/>
</dbReference>
<dbReference type="BioMuta" id="HGNC:28597"/>
<dbReference type="DMDM" id="71153216"/>
<dbReference type="AGR" id="HGNC:28597"/>
<dbReference type="GeneCards" id="LINC00305"/>
<dbReference type="HGNC" id="HGNC:28597">
    <property type="gene designation" value="LINC00305"/>
</dbReference>
<dbReference type="MIM" id="617489">
    <property type="type" value="gene"/>
</dbReference>
<dbReference type="neXtProt" id="NX_Q7Z4B0"/>
<dbReference type="InParanoid" id="Q7Z4B0"/>
<dbReference type="PAN-GO" id="Q7Z4B0">
    <property type="GO annotations" value="0 GO annotations based on evolutionary models"/>
</dbReference>
<dbReference type="PhylomeDB" id="Q7Z4B0"/>
<dbReference type="PathwayCommons" id="Q7Z4B0"/>
<dbReference type="CD-CODE" id="91857CE7">
    <property type="entry name" value="Nucleolus"/>
</dbReference>
<dbReference type="Pharos" id="Q7Z4B0">
    <property type="development level" value="Tdark"/>
</dbReference>
<dbReference type="Proteomes" id="UP000005640">
    <property type="component" value="Unplaced"/>
</dbReference>
<dbReference type="RNAct" id="Q7Z4B0">
    <property type="molecule type" value="protein"/>
</dbReference>
<dbReference type="GO" id="GO:0005576">
    <property type="term" value="C:extracellular region"/>
    <property type="evidence" value="ECO:0007669"/>
    <property type="project" value="UniProtKB-SubCell"/>
</dbReference>